<organism>
    <name type="scientific">Saccharomyces cerevisiae (strain ATCC 204508 / S288c)</name>
    <name type="common">Baker's yeast</name>
    <dbReference type="NCBI Taxonomy" id="559292"/>
    <lineage>
        <taxon>Eukaryota</taxon>
        <taxon>Fungi</taxon>
        <taxon>Dikarya</taxon>
        <taxon>Ascomycota</taxon>
        <taxon>Saccharomycotina</taxon>
        <taxon>Saccharomycetes</taxon>
        <taxon>Saccharomycetales</taxon>
        <taxon>Saccharomycetaceae</taxon>
        <taxon>Saccharomyces</taxon>
    </lineage>
</organism>
<accession>P32588</accession>
<accession>D6W1G2</accession>
<gene>
    <name evidence="11" type="primary">PUB1</name>
    <name type="synonym">RNP1</name>
    <name type="ordered locus">YNL016W</name>
    <name type="ORF">N2842</name>
</gene>
<name>PUB1_YEAST</name>
<proteinExistence type="evidence at protein level"/>
<sequence>MSENNEEQHQQQQQQQPVAVETPSAVEAPASADPSSEQSVAVEGNSEQAEDNQGENDPSVVPANAITGGRETSDRVLYVGNLDKAITEDILKQYFQVGGPIANIKIMIDKNNKNVNYAFVEYHQSHDANIALQTLNGKQIENNIVKINWAFQSQQSSSDDTFNLFVGDLNVNVDDETLRNAFKDFPSYLSGHVMWDMQTGSSRGYGFVSFTSQDDAQNAMDSMQGQDLNGRPLRINWAAKRDNNNNNNYQQRRNYGNNNRGGFRQYNSNNNNNMNMGMNMNMNMNMNNSRGMPPSSMGMPIGAMPLPSQGQPQQSQTIGLPPQVNPQAVDHIIRSAPPRVTTAYIGNIPHFATEADLIPLFQNFGFILDFKHYPEKGCCFIKYDTHEQAAVCIVALANFPFQGRNLRTGWGKERSNFMPQQQQQGGQPLIMNDQQQPVMSEQQQQQQQQQQQQ</sequence>
<protein>
    <recommendedName>
        <fullName evidence="12">Nuclear and cytoplasmic polyadenylated RNA-binding protein PUB1</fullName>
    </recommendedName>
    <alternativeName>
        <fullName>ARS consensus-binding protein ACBP-60</fullName>
    </alternativeName>
    <alternativeName>
        <fullName evidence="11">Poly uridylate-binding protein</fullName>
        <shortName>Poly(U)-binding protein</shortName>
    </alternativeName>
</protein>
<dbReference type="EMBL" id="L13725">
    <property type="protein sequence ID" value="AAC37348.1"/>
    <property type="molecule type" value="Unassigned_DNA"/>
</dbReference>
<dbReference type="EMBL" id="L20767">
    <property type="protein sequence ID" value="AAC37364.1"/>
    <property type="molecule type" value="Unassigned_DNA"/>
</dbReference>
<dbReference type="EMBL" id="L01797">
    <property type="protein sequence ID" value="AAA02808.1"/>
    <property type="status" value="ALT_FRAME"/>
    <property type="molecule type" value="Unassigned_DNA"/>
</dbReference>
<dbReference type="EMBL" id="Z71292">
    <property type="protein sequence ID" value="CAA95877.1"/>
    <property type="molecule type" value="Genomic_DNA"/>
</dbReference>
<dbReference type="EMBL" id="BK006947">
    <property type="protein sequence ID" value="DAA10528.1"/>
    <property type="molecule type" value="Genomic_DNA"/>
</dbReference>
<dbReference type="PIR" id="S62928">
    <property type="entry name" value="S62928"/>
</dbReference>
<dbReference type="RefSeq" id="NP_014382.1">
    <property type="nucleotide sequence ID" value="NM_001182855.1"/>
</dbReference>
<dbReference type="PDB" id="2LA4">
    <property type="method" value="NMR"/>
    <property type="chains" value="A=315-414"/>
</dbReference>
<dbReference type="PDB" id="3MD1">
    <property type="method" value="X-ray"/>
    <property type="resolution" value="1.60 A"/>
    <property type="chains" value="A/B=161-240"/>
</dbReference>
<dbReference type="PDB" id="3MD3">
    <property type="method" value="X-ray"/>
    <property type="resolution" value="2.70 A"/>
    <property type="chains" value="A=75-240"/>
</dbReference>
<dbReference type="PDB" id="6Z29">
    <property type="method" value="NMR"/>
    <property type="chains" value="A=316-414"/>
</dbReference>
<dbReference type="PDBsum" id="2LA4"/>
<dbReference type="PDBsum" id="3MD1"/>
<dbReference type="PDBsum" id="3MD3"/>
<dbReference type="PDBsum" id="6Z29"/>
<dbReference type="BMRB" id="P32588"/>
<dbReference type="SMR" id="P32588"/>
<dbReference type="BioGRID" id="35810">
    <property type="interactions" value="721"/>
</dbReference>
<dbReference type="DIP" id="DIP-5480N"/>
<dbReference type="FunCoup" id="P32588">
    <property type="interactions" value="1067"/>
</dbReference>
<dbReference type="IntAct" id="P32588">
    <property type="interactions" value="77"/>
</dbReference>
<dbReference type="MINT" id="P32588"/>
<dbReference type="STRING" id="4932.YNL016W"/>
<dbReference type="iPTMnet" id="P32588"/>
<dbReference type="PaxDb" id="4932-YNL016W"/>
<dbReference type="PeptideAtlas" id="P32588"/>
<dbReference type="EnsemblFungi" id="YNL016W_mRNA">
    <property type="protein sequence ID" value="YNL016W"/>
    <property type="gene ID" value="YNL016W"/>
</dbReference>
<dbReference type="GeneID" id="855716"/>
<dbReference type="KEGG" id="sce:YNL016W"/>
<dbReference type="AGR" id="SGD:S000004961"/>
<dbReference type="SGD" id="S000004961">
    <property type="gene designation" value="PUB1"/>
</dbReference>
<dbReference type="VEuPathDB" id="FungiDB:YNL016W"/>
<dbReference type="eggNOG" id="KOG0118">
    <property type="taxonomic scope" value="Eukaryota"/>
</dbReference>
<dbReference type="HOGENOM" id="CLU_025000_4_0_1"/>
<dbReference type="InParanoid" id="P32588"/>
<dbReference type="OMA" id="RINWASK"/>
<dbReference type="OrthoDB" id="8093034at2759"/>
<dbReference type="BioCyc" id="YEAST:G3O-33055-MONOMER"/>
<dbReference type="BioGRID-ORCS" id="855716">
    <property type="hits" value="10 hits in 10 CRISPR screens"/>
</dbReference>
<dbReference type="CD-CODE" id="22369FCF">
    <property type="entry name" value="Synthetic Condensate 000029"/>
</dbReference>
<dbReference type="CD-CODE" id="33BF1E0E">
    <property type="entry name" value="Synthetic Condensate 000053"/>
</dbReference>
<dbReference type="CD-CODE" id="60893955">
    <property type="entry name" value="Synthetic Condensate 000005"/>
</dbReference>
<dbReference type="CD-CODE" id="6F314257">
    <property type="entry name" value="Synthetic Condensate 000035"/>
</dbReference>
<dbReference type="CD-CODE" id="E03F929F">
    <property type="entry name" value="Stress granule"/>
</dbReference>
<dbReference type="EvolutionaryTrace" id="P32588"/>
<dbReference type="PRO" id="PR:P32588"/>
<dbReference type="Proteomes" id="UP000002311">
    <property type="component" value="Chromosome XIV"/>
</dbReference>
<dbReference type="RNAct" id="P32588">
    <property type="molecule type" value="protein"/>
</dbReference>
<dbReference type="GO" id="GO:0005737">
    <property type="term" value="C:cytoplasm"/>
    <property type="evidence" value="ECO:0000314"/>
    <property type="project" value="SGD"/>
</dbReference>
<dbReference type="GO" id="GO:0010494">
    <property type="term" value="C:cytoplasmic stress granule"/>
    <property type="evidence" value="ECO:0000314"/>
    <property type="project" value="SGD"/>
</dbReference>
<dbReference type="GO" id="GO:0005634">
    <property type="term" value="C:nucleus"/>
    <property type="evidence" value="ECO:0000314"/>
    <property type="project" value="SGD"/>
</dbReference>
<dbReference type="GO" id="GO:0000932">
    <property type="term" value="C:P-body"/>
    <property type="evidence" value="ECO:0000314"/>
    <property type="project" value="SGD"/>
</dbReference>
<dbReference type="GO" id="GO:0003729">
    <property type="term" value="F:mRNA binding"/>
    <property type="evidence" value="ECO:0000314"/>
    <property type="project" value="SGD"/>
</dbReference>
<dbReference type="GO" id="GO:0008266">
    <property type="term" value="F:poly(U) RNA binding"/>
    <property type="evidence" value="ECO:0000314"/>
    <property type="project" value="SGD"/>
</dbReference>
<dbReference type="GO" id="GO:0043022">
    <property type="term" value="F:ribosome binding"/>
    <property type="evidence" value="ECO:0000314"/>
    <property type="project" value="SGD"/>
</dbReference>
<dbReference type="GO" id="GO:0042149">
    <property type="term" value="P:cellular response to glucose starvation"/>
    <property type="evidence" value="ECO:0000315"/>
    <property type="project" value="SGD"/>
</dbReference>
<dbReference type="GO" id="GO:0000184">
    <property type="term" value="P:nuclear-transcribed mRNA catabolic process, nonsense-mediated decay"/>
    <property type="evidence" value="ECO:0000314"/>
    <property type="project" value="SGD"/>
</dbReference>
<dbReference type="GO" id="GO:0043488">
    <property type="term" value="P:regulation of mRNA stability"/>
    <property type="evidence" value="ECO:0000315"/>
    <property type="project" value="SGD"/>
</dbReference>
<dbReference type="GO" id="GO:0034063">
    <property type="term" value="P:stress granule assembly"/>
    <property type="evidence" value="ECO:0000315"/>
    <property type="project" value="SGD"/>
</dbReference>
<dbReference type="GO" id="GO:0006415">
    <property type="term" value="P:translational termination"/>
    <property type="evidence" value="ECO:0000315"/>
    <property type="project" value="SGD"/>
</dbReference>
<dbReference type="CDD" id="cd12614">
    <property type="entry name" value="RRM1_PUB1"/>
    <property type="match status" value="1"/>
</dbReference>
<dbReference type="CDD" id="cd12619">
    <property type="entry name" value="RRM2_PUB1"/>
    <property type="match status" value="1"/>
</dbReference>
<dbReference type="CDD" id="cd12622">
    <property type="entry name" value="RRM3_PUB1"/>
    <property type="match status" value="1"/>
</dbReference>
<dbReference type="FunFam" id="3.30.70.330:FF:000599">
    <property type="entry name" value="Poly(A) binding protein"/>
    <property type="match status" value="1"/>
</dbReference>
<dbReference type="FunFam" id="3.30.70.330:FF:000764">
    <property type="entry name" value="Poly(A) binding protein"/>
    <property type="match status" value="1"/>
</dbReference>
<dbReference type="FunFam" id="3.30.70.330:FF:000804">
    <property type="entry name" value="Poly(A) binding protein"/>
    <property type="match status" value="1"/>
</dbReference>
<dbReference type="Gene3D" id="3.30.70.330">
    <property type="match status" value="3"/>
</dbReference>
<dbReference type="InterPro" id="IPR012677">
    <property type="entry name" value="Nucleotide-bd_a/b_plait_sf"/>
</dbReference>
<dbReference type="InterPro" id="IPR035979">
    <property type="entry name" value="RBD_domain_sf"/>
</dbReference>
<dbReference type="InterPro" id="IPR000504">
    <property type="entry name" value="RRM_dom"/>
</dbReference>
<dbReference type="InterPro" id="IPR003954">
    <property type="entry name" value="RRM_dom_euk"/>
</dbReference>
<dbReference type="InterPro" id="IPR052462">
    <property type="entry name" value="SLIRP/GR-RBP-like"/>
</dbReference>
<dbReference type="PANTHER" id="PTHR48027">
    <property type="entry name" value="HETEROGENEOUS NUCLEAR RIBONUCLEOPROTEIN 87F-RELATED"/>
    <property type="match status" value="1"/>
</dbReference>
<dbReference type="Pfam" id="PF00076">
    <property type="entry name" value="RRM_1"/>
    <property type="match status" value="3"/>
</dbReference>
<dbReference type="SMART" id="SM00360">
    <property type="entry name" value="RRM"/>
    <property type="match status" value="3"/>
</dbReference>
<dbReference type="SMART" id="SM00361">
    <property type="entry name" value="RRM_1"/>
    <property type="match status" value="2"/>
</dbReference>
<dbReference type="SUPFAM" id="SSF54928">
    <property type="entry name" value="RNA-binding domain, RBD"/>
    <property type="match status" value="2"/>
</dbReference>
<dbReference type="PROSITE" id="PS50102">
    <property type="entry name" value="RRM"/>
    <property type="match status" value="3"/>
</dbReference>
<reference key="1">
    <citation type="journal article" date="1993" name="Mol. Cell. Biol.">
        <title>PUB1 is a major nuclear and cytoplasmic polyadenylated RNA-binding protein in Saccharomyces cerevisiae.</title>
        <authorList>
            <person name="Anderson J.T."/>
            <person name="Paddy M.R."/>
            <person name="Swanson M.S."/>
        </authorList>
    </citation>
    <scope>NUCLEOTIDE SEQUENCE [GENOMIC DNA]</scope>
    <scope>SUBCELLULAR LOCATION</scope>
</reference>
<reference key="2">
    <citation type="journal article" date="1993" name="Mol. Cell. Biol.">
        <title>PUB1: a major yeast poly(A)+ RNA-binding protein.</title>
        <authorList>
            <person name="Matunis M.J."/>
            <person name="Matunis E.L."/>
            <person name="Dreyfuss G."/>
        </authorList>
    </citation>
    <scope>NUCLEOTIDE SEQUENCE [GENOMIC DNA]</scope>
    <scope>FUNCTION</scope>
    <scope>SUBCELLULAR LOCATION</scope>
</reference>
<reference key="3">
    <citation type="journal article" date="1993" name="Nucleic Acids Res.">
        <title>A protein containing conserved RNA-recognition motifs is associated with ribosomal subunits in Saccharomyces cerevisiae.</title>
        <authorList>
            <person name="Ripmaster T.L."/>
            <person name="Woolford J.L. Jr."/>
        </authorList>
    </citation>
    <scope>NUCLEOTIDE SEQUENCE [GENOMIC DNA]</scope>
</reference>
<reference key="4">
    <citation type="journal article" date="1997" name="Nature">
        <title>The nucleotide sequence of Saccharomyces cerevisiae chromosome XIV and its evolutionary implications.</title>
        <authorList>
            <person name="Philippsen P."/>
            <person name="Kleine K."/>
            <person name="Poehlmann R."/>
            <person name="Duesterhoeft A."/>
            <person name="Hamberg K."/>
            <person name="Hegemann J.H."/>
            <person name="Obermaier B."/>
            <person name="Urrestarazu L.A."/>
            <person name="Aert R."/>
            <person name="Albermann K."/>
            <person name="Altmann R."/>
            <person name="Andre B."/>
            <person name="Baladron V."/>
            <person name="Ballesta J.P.G."/>
            <person name="Becam A.-M."/>
            <person name="Beinhauer J.D."/>
            <person name="Boskovic J."/>
            <person name="Buitrago M.J."/>
            <person name="Bussereau F."/>
            <person name="Coster F."/>
            <person name="Crouzet M."/>
            <person name="D'Angelo M."/>
            <person name="Dal Pero F."/>
            <person name="De Antoni A."/>
            <person name="del Rey F."/>
            <person name="Doignon F."/>
            <person name="Domdey H."/>
            <person name="Dubois E."/>
            <person name="Fiedler T.A."/>
            <person name="Fleig U."/>
            <person name="Floeth M."/>
            <person name="Fritz C."/>
            <person name="Gaillardin C."/>
            <person name="Garcia-Cantalejo J.M."/>
            <person name="Glansdorff N."/>
            <person name="Goffeau A."/>
            <person name="Gueldener U."/>
            <person name="Herbert C.J."/>
            <person name="Heumann K."/>
            <person name="Heuss-Neitzel D."/>
            <person name="Hilbert H."/>
            <person name="Hinni K."/>
            <person name="Iraqui Houssaini I."/>
            <person name="Jacquet M."/>
            <person name="Jimenez A."/>
            <person name="Jonniaux J.-L."/>
            <person name="Karpfinger-Hartl L."/>
            <person name="Lanfranchi G."/>
            <person name="Lepingle A."/>
            <person name="Levesque H."/>
            <person name="Lyck R."/>
            <person name="Maftahi M."/>
            <person name="Mallet L."/>
            <person name="Maurer C.T.C."/>
            <person name="Messenguy F."/>
            <person name="Mewes H.-W."/>
            <person name="Moestl D."/>
            <person name="Nasr F."/>
            <person name="Nicaud J.-M."/>
            <person name="Niedenthal R.K."/>
            <person name="Pandolfo D."/>
            <person name="Pierard A."/>
            <person name="Piravandi E."/>
            <person name="Planta R.J."/>
            <person name="Pohl T.M."/>
            <person name="Purnelle B."/>
            <person name="Rebischung C."/>
            <person name="Remacha M.A."/>
            <person name="Revuelta J.L."/>
            <person name="Rinke M."/>
            <person name="Saiz J.E."/>
            <person name="Sartorello F."/>
            <person name="Scherens B."/>
            <person name="Sen-Gupta M."/>
            <person name="Soler-Mira A."/>
            <person name="Urbanus J.H.M."/>
            <person name="Valle G."/>
            <person name="Van Dyck L."/>
            <person name="Verhasselt P."/>
            <person name="Vierendeels F."/>
            <person name="Vissers S."/>
            <person name="Voet M."/>
            <person name="Volckaert G."/>
            <person name="Wach A."/>
            <person name="Wambutt R."/>
            <person name="Wedler H."/>
            <person name="Zollner A."/>
            <person name="Hani J."/>
        </authorList>
    </citation>
    <scope>NUCLEOTIDE SEQUENCE [LARGE SCALE GENOMIC DNA]</scope>
    <source>
        <strain>ATCC 204508 / S288c</strain>
    </source>
</reference>
<reference key="5">
    <citation type="journal article" date="2014" name="G3 (Bethesda)">
        <title>The reference genome sequence of Saccharomyces cerevisiae: Then and now.</title>
        <authorList>
            <person name="Engel S.R."/>
            <person name="Dietrich F.S."/>
            <person name="Fisk D.G."/>
            <person name="Binkley G."/>
            <person name="Balakrishnan R."/>
            <person name="Costanzo M.C."/>
            <person name="Dwight S.S."/>
            <person name="Hitz B.C."/>
            <person name="Karra K."/>
            <person name="Nash R.S."/>
            <person name="Weng S."/>
            <person name="Wong E.D."/>
            <person name="Lloyd P."/>
            <person name="Skrzypek M.S."/>
            <person name="Miyasato S.R."/>
            <person name="Simison M."/>
            <person name="Cherry J.M."/>
        </authorList>
    </citation>
    <scope>GENOME REANNOTATION</scope>
    <source>
        <strain>ATCC 204508 / S288c</strain>
    </source>
</reference>
<reference key="6">
    <citation type="journal article" date="1994" name="Nucleic Acids Res.">
        <title>The yeast protein encoded by PUB1 binds T-rich single stranded DNA.</title>
        <authorList>
            <person name="Cockell M."/>
            <person name="Frutiger S."/>
            <person name="Hughes G.J."/>
            <person name="Gasser S.M."/>
        </authorList>
    </citation>
    <scope>CHARACTERIZATION</scope>
    <scope>PARTIAL PROTEIN SEQUENCE</scope>
</reference>
<reference key="7">
    <citation type="journal article" date="1997" name="Electrophoresis">
        <title>Proteome studies of Saccharomyces cerevisiae: identification and characterization of abundant proteins.</title>
        <authorList>
            <person name="Garrels J.I."/>
            <person name="McLaughlin C.S."/>
            <person name="Warner J.R."/>
            <person name="Futcher B."/>
            <person name="Latter G.I."/>
            <person name="Kobayashi R."/>
            <person name="Schwender B."/>
            <person name="Volpe T."/>
            <person name="Anderson D.S."/>
            <person name="Mesquita-Fuentes R."/>
            <person name="Payne W.E."/>
        </authorList>
    </citation>
    <scope>ACETYLATION AT SER-2</scope>
</reference>
<reference key="8">
    <citation type="journal article" date="2003" name="Nature">
        <title>Global analysis of protein expression in yeast.</title>
        <authorList>
            <person name="Ghaemmaghami S."/>
            <person name="Huh W.-K."/>
            <person name="Bower K."/>
            <person name="Howson R.W."/>
            <person name="Belle A."/>
            <person name="Dephoure N."/>
            <person name="O'Shea E.K."/>
            <person name="Weissman J.S."/>
        </authorList>
    </citation>
    <scope>LEVEL OF PROTEIN EXPRESSION [LARGE SCALE ANALYSIS]</scope>
</reference>
<reference key="9">
    <citation type="journal article" date="2007" name="Mol. Cell. Biol.">
        <title>An interaction between two RNA binding proteins, Nab2 and Pub1, links mRNA processing/export and mRNA stability.</title>
        <authorList>
            <person name="Apponi L.H."/>
            <person name="Kelly S.M."/>
            <person name="Harreman M.T."/>
            <person name="Lehner A.N."/>
            <person name="Corbett A.H."/>
            <person name="Valentini S.R."/>
        </authorList>
    </citation>
    <scope>INTERACTION WITH NAB2</scope>
</reference>
<reference key="10">
    <citation type="journal article" date="2013" name="Nat. Struct. Mol. Biol.">
        <title>Global analysis of yeast mRNPs.</title>
        <authorList>
            <person name="Mitchell S.F."/>
            <person name="Jain S."/>
            <person name="She M."/>
            <person name="Parker R."/>
        </authorList>
    </citation>
    <scope>SUBCELLULAR LOCATION</scope>
</reference>
<reference key="11">
    <citation type="journal article" date="2021" name="J. Proteome Res.">
        <title>Discovery of arginine methylation, phosphorylation, and their co-occurrence in condensate-associated proteins in Saccharomyces cerevisiae.</title>
        <authorList>
            <person name="Hamey J.J."/>
            <person name="Nguyen A."/>
            <person name="Wilkins M.R."/>
        </authorList>
    </citation>
    <scope>METHYLATION AT ARG-260</scope>
</reference>
<reference evidence="14" key="12">
    <citation type="submission" date="2010-03" db="PDB data bank">
        <title>Crystal structure of the first two RRM domains of yeast poly(U) binding protein (Pub1).</title>
        <authorList>
            <person name="Li H."/>
            <person name="Shi H."/>
            <person name="Zhu Z."/>
            <person name="Wang H."/>
            <person name="Niu L."/>
            <person name="Teng M."/>
        </authorList>
    </citation>
    <scope>X-RAY CRYSTALLOGRAPHY (2.70 ANGSTROMS) OF 75-240</scope>
</reference>
<reference evidence="13" key="13">
    <citation type="journal article" date="2011" name="PLoS ONE">
        <title>Pub1p C-terminal RRM domain interacts with Tif4631p through a conserved region neighbouring the Pab1p binding site.</title>
        <authorList>
            <person name="Santiveri C.M."/>
            <person name="Mirassou Y."/>
            <person name="Rico-Lastres P."/>
            <person name="Martinez-Lumbreras S."/>
            <person name="Perez-Canadillas J.M."/>
        </authorList>
    </citation>
    <scope>STRUCTURE BY NMR OF 315-414</scope>
</reference>
<feature type="initiator methionine" description="Removed" evidence="10">
    <location>
        <position position="1"/>
    </location>
</feature>
<feature type="chain" id="PRO_0000081745" description="Nuclear and cytoplasmic polyadenylated RNA-binding protein PUB1">
    <location>
        <begin position="2"/>
        <end position="453"/>
    </location>
</feature>
<feature type="domain" description="RRM 1" evidence="2">
    <location>
        <begin position="75"/>
        <end position="152"/>
    </location>
</feature>
<feature type="domain" description="RRM 2" evidence="2">
    <location>
        <begin position="162"/>
        <end position="240"/>
    </location>
</feature>
<feature type="domain" description="RRM 3" evidence="2">
    <location>
        <begin position="341"/>
        <end position="413"/>
    </location>
</feature>
<feature type="region of interest" description="Disordered" evidence="3">
    <location>
        <begin position="1"/>
        <end position="67"/>
    </location>
</feature>
<feature type="region of interest" description="Disordered" evidence="3">
    <location>
        <begin position="241"/>
        <end position="262"/>
    </location>
</feature>
<feature type="region of interest" description="RNA-binding RGG-box" evidence="1">
    <location>
        <begin position="260"/>
        <end position="264"/>
    </location>
</feature>
<feature type="region of interest" description="Disordered" evidence="3">
    <location>
        <begin position="419"/>
        <end position="453"/>
    </location>
</feature>
<feature type="compositionally biased region" description="Low complexity" evidence="3">
    <location>
        <begin position="244"/>
        <end position="262"/>
    </location>
</feature>
<feature type="compositionally biased region" description="Low complexity" evidence="3">
    <location>
        <begin position="434"/>
        <end position="453"/>
    </location>
</feature>
<feature type="modified residue" description="N-acetylserine" evidence="10">
    <location>
        <position position="2"/>
    </location>
</feature>
<feature type="modified residue" description="Omega-N-methylarginine" evidence="7">
    <location>
        <position position="260"/>
    </location>
</feature>
<feature type="sequence conflict" description="In Ref. 1; AAC37348 and 2; AAC37364." evidence="12" ref="1 2">
    <original>S</original>
    <variation>N</variation>
    <location>
        <position position="268"/>
    </location>
</feature>
<feature type="strand" evidence="17">
    <location>
        <begin position="76"/>
        <end position="83"/>
    </location>
</feature>
<feature type="helix" evidence="17">
    <location>
        <begin position="88"/>
        <end position="95"/>
    </location>
</feature>
<feature type="helix" evidence="17">
    <location>
        <begin position="96"/>
        <end position="98"/>
    </location>
</feature>
<feature type="strand" evidence="17">
    <location>
        <begin position="101"/>
        <end position="107"/>
    </location>
</feature>
<feature type="strand" evidence="17">
    <location>
        <begin position="115"/>
        <end position="124"/>
    </location>
</feature>
<feature type="helix" evidence="17">
    <location>
        <begin position="125"/>
        <end position="135"/>
    </location>
</feature>
<feature type="strand" evidence="17">
    <location>
        <begin position="146"/>
        <end position="149"/>
    </location>
</feature>
<feature type="strand" evidence="16">
    <location>
        <begin position="162"/>
        <end position="167"/>
    </location>
</feature>
<feature type="helix" evidence="16">
    <location>
        <begin position="175"/>
        <end position="182"/>
    </location>
</feature>
<feature type="strand" evidence="16">
    <location>
        <begin position="188"/>
        <end position="195"/>
    </location>
</feature>
<feature type="turn" evidence="16">
    <location>
        <begin position="197"/>
        <end position="199"/>
    </location>
</feature>
<feature type="strand" evidence="16">
    <location>
        <begin position="202"/>
        <end position="211"/>
    </location>
</feature>
<feature type="helix" evidence="16">
    <location>
        <begin position="213"/>
        <end position="223"/>
    </location>
</feature>
<feature type="strand" evidence="16">
    <location>
        <begin position="234"/>
        <end position="237"/>
    </location>
</feature>
<feature type="strand" evidence="15">
    <location>
        <begin position="322"/>
        <end position="324"/>
    </location>
</feature>
<feature type="helix" evidence="15">
    <location>
        <begin position="326"/>
        <end position="333"/>
    </location>
</feature>
<feature type="strand" evidence="15">
    <location>
        <begin position="342"/>
        <end position="347"/>
    </location>
</feature>
<feature type="helix" evidence="15">
    <location>
        <begin position="354"/>
        <end position="362"/>
    </location>
</feature>
<feature type="strand" evidence="15">
    <location>
        <begin position="368"/>
        <end position="373"/>
    </location>
</feature>
<feature type="turn" evidence="15">
    <location>
        <begin position="374"/>
        <end position="377"/>
    </location>
</feature>
<feature type="strand" evidence="15">
    <location>
        <begin position="378"/>
        <end position="382"/>
    </location>
</feature>
<feature type="helix" evidence="15">
    <location>
        <begin position="386"/>
        <end position="396"/>
    </location>
</feature>
<feature type="strand" evidence="18">
    <location>
        <begin position="400"/>
        <end position="405"/>
    </location>
</feature>
<keyword id="KW-0002">3D-structure</keyword>
<keyword id="KW-0007">Acetylation</keyword>
<keyword id="KW-0963">Cytoplasm</keyword>
<keyword id="KW-0903">Direct protein sequencing</keyword>
<keyword id="KW-0488">Methylation</keyword>
<keyword id="KW-0539">Nucleus</keyword>
<keyword id="KW-1185">Reference proteome</keyword>
<keyword id="KW-0677">Repeat</keyword>
<keyword id="KW-0694">RNA-binding</keyword>
<comment type="function">
    <text>May be associated with hnRNA within the nucleus and remains associated during nucleocytoplasmic mRNA transport, once the proteins are in the cytoplasm, disassembly of PUB1-RNA complexes may occur prior to PAB1 binding and formation of a translationally competent RNP complex. Binds to polyadenylated RNA; prefers to bind poly(rU); binds to T-rich single-stranded DNA.</text>
</comment>
<comment type="subunit">
    <text evidence="5">Interacts with NAB2.</text>
</comment>
<comment type="interaction">
    <interactant intactId="EBI-14231">
        <id>P32588</id>
    </interactant>
    <interactant intactId="EBI-25362">
        <id>P40561</id>
        <label>SGN1</label>
    </interactant>
    <organismsDiffer>false</organismsDiffer>
    <experiments>3</experiments>
</comment>
<comment type="subcellular location">
    <subcellularLocation>
        <location evidence="6 8">Cytoplasm</location>
    </subcellularLocation>
    <subcellularLocation>
        <location evidence="8 9">Nucleus</location>
    </subcellularLocation>
    <subcellularLocation>
        <location evidence="6">Cytoplasm</location>
        <location evidence="6">P-body</location>
    </subcellularLocation>
    <subcellularLocation>
        <location evidence="6">Cytoplasm</location>
        <location evidence="6">Stress granule</location>
    </subcellularLocation>
</comment>
<comment type="miscellaneous">
    <text evidence="4">Present with 49600 molecules/cell in log phase SD medium.</text>
</comment>
<comment type="sequence caution" evidence="12">
    <conflict type="frameshift">
        <sequence resource="EMBL-CDS" id="AAA02808"/>
    </conflict>
</comment>
<evidence type="ECO:0000250" key="1"/>
<evidence type="ECO:0000255" key="2">
    <source>
        <dbReference type="PROSITE-ProRule" id="PRU00176"/>
    </source>
</evidence>
<evidence type="ECO:0000256" key="3">
    <source>
        <dbReference type="SAM" id="MobiDB-lite"/>
    </source>
</evidence>
<evidence type="ECO:0000269" key="4">
    <source>
    </source>
</evidence>
<evidence type="ECO:0000269" key="5">
    <source>
    </source>
</evidence>
<evidence type="ECO:0000269" key="6">
    <source>
    </source>
</evidence>
<evidence type="ECO:0000269" key="7">
    <source>
    </source>
</evidence>
<evidence type="ECO:0000269" key="8">
    <source>
    </source>
</evidence>
<evidence type="ECO:0000269" key="9">
    <source>
    </source>
</evidence>
<evidence type="ECO:0000269" key="10">
    <source>
    </source>
</evidence>
<evidence type="ECO:0000303" key="11">
    <source>
    </source>
</evidence>
<evidence type="ECO:0000305" key="12"/>
<evidence type="ECO:0007744" key="13">
    <source>
        <dbReference type="PDB" id="2LA4"/>
    </source>
</evidence>
<evidence type="ECO:0007744" key="14">
    <source>
        <dbReference type="PDB" id="3MD3"/>
    </source>
</evidence>
<evidence type="ECO:0007829" key="15">
    <source>
        <dbReference type="PDB" id="2LA4"/>
    </source>
</evidence>
<evidence type="ECO:0007829" key="16">
    <source>
        <dbReference type="PDB" id="3MD1"/>
    </source>
</evidence>
<evidence type="ECO:0007829" key="17">
    <source>
        <dbReference type="PDB" id="3MD3"/>
    </source>
</evidence>
<evidence type="ECO:0007829" key="18">
    <source>
        <dbReference type="PDB" id="6Z29"/>
    </source>
</evidence>